<accession>P47114</accession>
<accession>D6VWM5</accession>
<name>KCH1_YEAST</name>
<keyword id="KW-1003">Cell membrane</keyword>
<keyword id="KW-0406">Ion transport</keyword>
<keyword id="KW-0472">Membrane</keyword>
<keyword id="KW-0597">Phosphoprotein</keyword>
<keyword id="KW-1185">Reference proteome</keyword>
<keyword id="KW-0812">Transmembrane</keyword>
<keyword id="KW-1133">Transmembrane helix</keyword>
<keyword id="KW-0813">Transport</keyword>
<keyword id="KW-0926">Vacuole</keyword>
<sequence length="497" mass="57517">MFNHDWKYSINSKTFADLNIELFRNHKFKTVLNYIIGVVGWNGLKLALFVSDIYTCIKLLAFNSWSNNIIKPYLPFKISKWLFSGCILASIVLLIWEAIAGMRIYKTGNISLTYVNNFSRNLNSVLNYSKFCVYNMIERKGFRQKMTFFTFFQLKDCIRLIFTDTPRQVINGLTLWSVLVTVNKNEDLGDLESFTGLINKIKNIGQTNHEEAVILSLMLFSFIIWALFVFKFLLAVICSIFVYYKIINDQEYSGLREYICVTVSENVDELVERQRKKENDDTIYKTGLLESQTFDDFKEVENKIETSFNDTSYASNNDSMIELIERRPEYKSQDVCGPIPTMKKTETMESFVDNGNPQYTTRFSAILDSPYINSYESNDIKKAKIQSRSVNTPKYEDLSSSDIFNKIHSAGQLKSTTSMEFHGPLDSMPNTTNNIRNFNSNSSRPRPPPLQTKSSINSKADSNDNGRIYTPMKAYFREPDLPRKGLLEDEDRTYNYT</sequence>
<feature type="chain" id="PRO_0000203096" description="Low affinity K(+) transporter 1">
    <location>
        <begin position="1"/>
        <end position="497"/>
    </location>
</feature>
<feature type="topological domain" description="Extracellular" evidence="9">
    <location>
        <begin position="1"/>
        <end position="29"/>
    </location>
</feature>
<feature type="transmembrane region" description="Helical" evidence="1">
    <location>
        <begin position="30"/>
        <end position="50"/>
    </location>
</feature>
<feature type="topological domain" description="Cytoplasmic" evidence="9">
    <location>
        <begin position="51"/>
        <end position="80"/>
    </location>
</feature>
<feature type="transmembrane region" description="Helical" evidence="1">
    <location>
        <begin position="81"/>
        <end position="101"/>
    </location>
</feature>
<feature type="topological domain" description="Extracellular" evidence="9">
    <location>
        <begin position="102"/>
        <end position="216"/>
    </location>
</feature>
<feature type="transmembrane region" description="Helical" evidence="1">
    <location>
        <begin position="217"/>
        <end position="237"/>
    </location>
</feature>
<feature type="topological domain" description="Cytoplasmic" evidence="9">
    <location>
        <begin position="238"/>
        <end position="497"/>
    </location>
</feature>
<feature type="region of interest" description="Disordered" evidence="2">
    <location>
        <begin position="420"/>
        <end position="469"/>
    </location>
</feature>
<feature type="compositionally biased region" description="Low complexity" evidence="2">
    <location>
        <begin position="429"/>
        <end position="444"/>
    </location>
</feature>
<feature type="compositionally biased region" description="Polar residues" evidence="2">
    <location>
        <begin position="451"/>
        <end position="465"/>
    </location>
</feature>
<feature type="modified residue" description="Phosphoserine" evidence="10">
    <location>
        <position position="291"/>
    </location>
</feature>
<feature type="modified residue" description="Phosphoserine" evidence="10">
    <location>
        <position position="319"/>
    </location>
</feature>
<comment type="function">
    <text evidence="5 6">Low affinity potassium transporter that, with PRM6/KCH2, participates in high-affinity Ca(2+) influx system (HACS) activation during the response to mating pheromone (PubMed:21252230, PubMed:23204190). Directly promotes K(+) influx and HACS may electrochemically respond to this K(+) influx (PubMed:23204190). KCH1 and KCH2 act at the apex of the calcium signaling pathway that is used for survival during prolonged exposures to mating pheromones (PubMed:23204190).</text>
</comment>
<comment type="catalytic activity">
    <reaction evidence="6">
        <text>K(+)(in) = K(+)(out)</text>
        <dbReference type="Rhea" id="RHEA:29463"/>
        <dbReference type="ChEBI" id="CHEBI:29103"/>
    </reaction>
    <physiologicalReaction direction="right-to-left" evidence="6">
        <dbReference type="Rhea" id="RHEA:29465"/>
    </physiologicalReaction>
</comment>
<comment type="subcellular location">
    <subcellularLocation>
        <location evidence="3">Vacuole membrane</location>
        <topology evidence="3">Multi-pass membrane protein</topology>
    </subcellularLocation>
    <subcellularLocation>
        <location evidence="6">Cell membrane</location>
        <topology evidence="1">Multi-pass membrane protein</topology>
    </subcellularLocation>
</comment>
<comment type="induction">
    <text evidence="6">Expression is strongly induced during the response to alpha-factor.</text>
</comment>
<comment type="disruption phenotype">
    <text evidence="5 6">Leads to high-affinity Ca(2+) influx system (HACS) deficiency (PubMed:21252230, PubMed:23204190). Causes a large increase of cell death in response to mating pheromone, when PRM6/KCH2 is also deleted (PubMed:23204190).</text>
</comment>
<comment type="miscellaneous">
    <text evidence="4">Present with 538 molecules/cell in log phase SD medium.</text>
</comment>
<comment type="similarity">
    <text evidence="8">Belongs to the KCH1 low affinity K(+) transporter family.</text>
</comment>
<dbReference type="EMBL" id="Z49554">
    <property type="protein sequence ID" value="CAA89582.1"/>
    <property type="molecule type" value="Genomic_DNA"/>
</dbReference>
<dbReference type="EMBL" id="L47993">
    <property type="protein sequence ID" value="AAB39280.1"/>
    <property type="molecule type" value="Genomic_DNA"/>
</dbReference>
<dbReference type="EMBL" id="BK006943">
    <property type="protein sequence ID" value="DAA08841.1"/>
    <property type="molecule type" value="Genomic_DNA"/>
</dbReference>
<dbReference type="PIR" id="S57073">
    <property type="entry name" value="S57073"/>
</dbReference>
<dbReference type="RefSeq" id="NP_012588.1">
    <property type="nucleotide sequence ID" value="NM_001181712.1"/>
</dbReference>
<dbReference type="SMR" id="P47114"/>
<dbReference type="BioGRID" id="33808">
    <property type="interactions" value="420"/>
</dbReference>
<dbReference type="DIP" id="DIP-7378N"/>
<dbReference type="FunCoup" id="P47114">
    <property type="interactions" value="39"/>
</dbReference>
<dbReference type="MINT" id="P47114"/>
<dbReference type="STRING" id="4932.YJR054W"/>
<dbReference type="TCDB" id="1.A.88.1.1">
    <property type="family name" value="the fungal potassium channel (f-kch) family"/>
</dbReference>
<dbReference type="iPTMnet" id="P47114"/>
<dbReference type="PaxDb" id="4932-YJR054W"/>
<dbReference type="PeptideAtlas" id="P47114"/>
<dbReference type="EnsemblFungi" id="YJR054W_mRNA">
    <property type="protein sequence ID" value="YJR054W"/>
    <property type="gene ID" value="YJR054W"/>
</dbReference>
<dbReference type="GeneID" id="853514"/>
<dbReference type="KEGG" id="sce:YJR054W"/>
<dbReference type="AGR" id="SGD:S000003815"/>
<dbReference type="SGD" id="S000003815">
    <property type="gene designation" value="KCH1"/>
</dbReference>
<dbReference type="VEuPathDB" id="FungiDB:YJR054W"/>
<dbReference type="eggNOG" id="ENOG502QVFG">
    <property type="taxonomic scope" value="Eukaryota"/>
</dbReference>
<dbReference type="GeneTree" id="ENSGT00940000176676"/>
<dbReference type="HOGENOM" id="CLU_036942_1_0_1"/>
<dbReference type="InParanoid" id="P47114"/>
<dbReference type="OMA" id="AGMRIYK"/>
<dbReference type="OrthoDB" id="2128042at2759"/>
<dbReference type="BioCyc" id="YEAST:G3O-31688-MONOMER"/>
<dbReference type="BioGRID-ORCS" id="853514">
    <property type="hits" value="2 hits in 10 CRISPR screens"/>
</dbReference>
<dbReference type="PRO" id="PR:P47114"/>
<dbReference type="Proteomes" id="UP000002311">
    <property type="component" value="Chromosome X"/>
</dbReference>
<dbReference type="RNAct" id="P47114">
    <property type="molecule type" value="protein"/>
</dbReference>
<dbReference type="GO" id="GO:0000324">
    <property type="term" value="C:fungal-type vacuole"/>
    <property type="evidence" value="ECO:0007005"/>
    <property type="project" value="SGD"/>
</dbReference>
<dbReference type="GO" id="GO:0005937">
    <property type="term" value="C:mating projection"/>
    <property type="evidence" value="ECO:0000314"/>
    <property type="project" value="SGD"/>
</dbReference>
<dbReference type="GO" id="GO:0005886">
    <property type="term" value="C:plasma membrane"/>
    <property type="evidence" value="ECO:0000314"/>
    <property type="project" value="SGD"/>
</dbReference>
<dbReference type="GO" id="GO:0005774">
    <property type="term" value="C:vacuolar membrane"/>
    <property type="evidence" value="ECO:0007669"/>
    <property type="project" value="UniProtKB-SubCell"/>
</dbReference>
<dbReference type="GO" id="GO:0015079">
    <property type="term" value="F:potassium ion transmembrane transporter activity"/>
    <property type="evidence" value="ECO:0000314"/>
    <property type="project" value="SGD"/>
</dbReference>
<dbReference type="GO" id="GO:0071805">
    <property type="term" value="P:potassium ion transmembrane transport"/>
    <property type="evidence" value="ECO:0000314"/>
    <property type="project" value="SGD"/>
</dbReference>
<dbReference type="InterPro" id="IPR031606">
    <property type="entry name" value="Kch1/2"/>
</dbReference>
<dbReference type="PANTHER" id="PTHR36424:SF1">
    <property type="entry name" value="LOW AFFINITY K(+) TRANSPORTER 1-RELATED"/>
    <property type="match status" value="1"/>
</dbReference>
<dbReference type="PANTHER" id="PTHR36424">
    <property type="entry name" value="PHEROMONE-REGULATED MEMBRANE PROTEIN 6"/>
    <property type="match status" value="1"/>
</dbReference>
<dbReference type="Pfam" id="PF16944">
    <property type="entry name" value="KCH"/>
    <property type="match status" value="1"/>
</dbReference>
<gene>
    <name evidence="7" type="primary">KCH1</name>
    <name type="ordered locus">YJR054W</name>
    <name type="ORF">J1669</name>
</gene>
<evidence type="ECO:0000255" key="1"/>
<evidence type="ECO:0000256" key="2">
    <source>
        <dbReference type="SAM" id="MobiDB-lite"/>
    </source>
</evidence>
<evidence type="ECO:0000269" key="3">
    <source>
    </source>
</evidence>
<evidence type="ECO:0000269" key="4">
    <source>
    </source>
</evidence>
<evidence type="ECO:0000269" key="5">
    <source>
    </source>
</evidence>
<evidence type="ECO:0000269" key="6">
    <source>
    </source>
</evidence>
<evidence type="ECO:0000303" key="7">
    <source>
    </source>
</evidence>
<evidence type="ECO:0000305" key="8"/>
<evidence type="ECO:0000305" key="9">
    <source>
    </source>
</evidence>
<evidence type="ECO:0007744" key="10">
    <source>
    </source>
</evidence>
<reference key="1">
    <citation type="journal article" date="1996" name="Yeast">
        <title>Analysis of a 62 kb DNA sequence of chromosome X reveals 36 open reading frames and a gene cluster with a counterpart on chromosome XI.</title>
        <authorList>
            <person name="Huang M.-E."/>
            <person name="Manus V."/>
            <person name="Chuat J.-C."/>
            <person name="Galibert F."/>
        </authorList>
    </citation>
    <scope>NUCLEOTIDE SEQUENCE [GENOMIC DNA]</scope>
    <source>
        <strain>ATCC 204508 / S288c</strain>
    </source>
</reference>
<reference key="2">
    <citation type="journal article" date="1996" name="EMBO J.">
        <title>Complete nucleotide sequence of Saccharomyces cerevisiae chromosome X.</title>
        <authorList>
            <person name="Galibert F."/>
            <person name="Alexandraki D."/>
            <person name="Baur A."/>
            <person name="Boles E."/>
            <person name="Chalwatzis N."/>
            <person name="Chuat J.-C."/>
            <person name="Coster F."/>
            <person name="Cziepluch C."/>
            <person name="de Haan M."/>
            <person name="Domdey H."/>
            <person name="Durand P."/>
            <person name="Entian K.-D."/>
            <person name="Gatius M."/>
            <person name="Goffeau A."/>
            <person name="Grivell L.A."/>
            <person name="Hennemann A."/>
            <person name="Herbert C.J."/>
            <person name="Heumann K."/>
            <person name="Hilger F."/>
            <person name="Hollenberg C.P."/>
            <person name="Huang M.-E."/>
            <person name="Jacq C."/>
            <person name="Jauniaux J.-C."/>
            <person name="Katsoulou C."/>
            <person name="Kirchrath L."/>
            <person name="Kleine K."/>
            <person name="Kordes E."/>
            <person name="Koetter P."/>
            <person name="Liebl S."/>
            <person name="Louis E.J."/>
            <person name="Manus V."/>
            <person name="Mewes H.-W."/>
            <person name="Miosga T."/>
            <person name="Obermaier B."/>
            <person name="Perea J."/>
            <person name="Pohl T.M."/>
            <person name="Portetelle D."/>
            <person name="Pujol A."/>
            <person name="Purnelle B."/>
            <person name="Ramezani Rad M."/>
            <person name="Rasmussen S.W."/>
            <person name="Rose M."/>
            <person name="Rossau R."/>
            <person name="Schaaff-Gerstenschlaeger I."/>
            <person name="Smits P.H.M."/>
            <person name="Scarcez T."/>
            <person name="Soriano N."/>
            <person name="To Van D."/>
            <person name="Tzermia M."/>
            <person name="Van Broekhoven A."/>
            <person name="Vandenbol M."/>
            <person name="Wedler H."/>
            <person name="von Wettstein D."/>
            <person name="Wambutt R."/>
            <person name="Zagulski M."/>
            <person name="Zollner A."/>
            <person name="Karpfinger-Hartl L."/>
        </authorList>
    </citation>
    <scope>NUCLEOTIDE SEQUENCE [LARGE SCALE GENOMIC DNA]</scope>
    <source>
        <strain>ATCC 204508 / S288c</strain>
    </source>
</reference>
<reference key="3">
    <citation type="journal article" date="2014" name="G3 (Bethesda)">
        <title>The reference genome sequence of Saccharomyces cerevisiae: Then and now.</title>
        <authorList>
            <person name="Engel S.R."/>
            <person name="Dietrich F.S."/>
            <person name="Fisk D.G."/>
            <person name="Binkley G."/>
            <person name="Balakrishnan R."/>
            <person name="Costanzo M.C."/>
            <person name="Dwight S.S."/>
            <person name="Hitz B.C."/>
            <person name="Karra K."/>
            <person name="Nash R.S."/>
            <person name="Weng S."/>
            <person name="Wong E.D."/>
            <person name="Lloyd P."/>
            <person name="Skrzypek M.S."/>
            <person name="Miyasato S.R."/>
            <person name="Simison M."/>
            <person name="Cherry J.M."/>
        </authorList>
    </citation>
    <scope>GENOME REANNOTATION</scope>
    <source>
        <strain>ATCC 204508 / S288c</strain>
    </source>
</reference>
<reference key="4">
    <citation type="journal article" date="2003" name="Nature">
        <title>Global analysis of protein localization in budding yeast.</title>
        <authorList>
            <person name="Huh W.-K."/>
            <person name="Falvo J.V."/>
            <person name="Gerke L.C."/>
            <person name="Carroll A.S."/>
            <person name="Howson R.W."/>
            <person name="Weissman J.S."/>
            <person name="O'Shea E.K."/>
        </authorList>
    </citation>
    <scope>SUBCELLULAR LOCATION [LARGE SCALE ANALYSIS]</scope>
</reference>
<reference key="5">
    <citation type="journal article" date="2003" name="Nature">
        <title>Global analysis of protein expression in yeast.</title>
        <authorList>
            <person name="Ghaemmaghami S."/>
            <person name="Huh W.-K."/>
            <person name="Bower K."/>
            <person name="Howson R.W."/>
            <person name="Belle A."/>
            <person name="Dephoure N."/>
            <person name="O'Shea E.K."/>
            <person name="Weissman J.S."/>
        </authorList>
    </citation>
    <scope>LEVEL OF PROTEIN EXPRESSION [LARGE SCALE ANALYSIS]</scope>
</reference>
<reference key="6">
    <citation type="journal article" date="2006" name="Proc. Natl. Acad. Sci. U.S.A.">
        <title>A global topology map of the Saccharomyces cerevisiae membrane proteome.</title>
        <authorList>
            <person name="Kim H."/>
            <person name="Melen K."/>
            <person name="Oesterberg M."/>
            <person name="von Heijne G."/>
        </authorList>
    </citation>
    <scope>TOPOLOGY [LARGE SCALE ANALYSIS]</scope>
    <source>
        <strain>ATCC 208353 / W303-1A</strain>
    </source>
</reference>
<reference key="7">
    <citation type="journal article" date="2009" name="Science">
        <title>Global analysis of Cdk1 substrate phosphorylation sites provides insights into evolution.</title>
        <authorList>
            <person name="Holt L.J."/>
            <person name="Tuch B.B."/>
            <person name="Villen J."/>
            <person name="Johnson A.D."/>
            <person name="Gygi S.P."/>
            <person name="Morgan D.O."/>
        </authorList>
    </citation>
    <scope>PHOSPHORYLATION [LARGE SCALE ANALYSIS] AT SER-291 AND SER-319</scope>
    <scope>IDENTIFICATION BY MASS SPECTROMETRY [LARGE SCALE ANALYSIS]</scope>
</reference>
<reference key="8">
    <citation type="journal article" date="2011" name="J. Biol. Chem.">
        <title>New regulators of a high affinity Ca2+ influx system revealed through a genome-wide screen in yeast.</title>
        <authorList>
            <person name="Martin D.C."/>
            <person name="Kim H."/>
            <person name="Mackin N.A."/>
            <person name="Maldonado-Baez L."/>
            <person name="Evangelista C.C. Jr."/>
            <person name="Beaudry V.G."/>
            <person name="Dudgeon D.D."/>
            <person name="Naiman D.Q."/>
            <person name="Erdman S.E."/>
            <person name="Cunningham K.W."/>
        </authorList>
    </citation>
    <scope>FUNCTION</scope>
    <scope>DISRUPTION PHENOTYPE</scope>
</reference>
<reference key="9">
    <citation type="journal article" date="2013" name="Eukaryot. Cell">
        <title>Activation of an essential calcium signaling pathway in Saccharomyces cerevisiae by Kch1 and Kch2, putative low-affinity potassium transporters.</title>
        <authorList>
            <person name="Stefan C.P."/>
            <person name="Zhang N."/>
            <person name="Sokabe T."/>
            <person name="Rivetta A."/>
            <person name="Slayman C.L."/>
            <person name="Montell C."/>
            <person name="Cunningham K.W."/>
        </authorList>
    </citation>
    <scope>FUNCTION</scope>
    <scope>DISRUPTION PHENOTYPE</scope>
    <scope>INDUCTION</scope>
    <scope>SUBCELLULAR LOCATION</scope>
    <scope>CATALYTIC ACTIVITY</scope>
</reference>
<proteinExistence type="evidence at protein level"/>
<organism>
    <name type="scientific">Saccharomyces cerevisiae (strain ATCC 204508 / S288c)</name>
    <name type="common">Baker's yeast</name>
    <dbReference type="NCBI Taxonomy" id="559292"/>
    <lineage>
        <taxon>Eukaryota</taxon>
        <taxon>Fungi</taxon>
        <taxon>Dikarya</taxon>
        <taxon>Ascomycota</taxon>
        <taxon>Saccharomycotina</taxon>
        <taxon>Saccharomycetes</taxon>
        <taxon>Saccharomycetales</taxon>
        <taxon>Saccharomycetaceae</taxon>
        <taxon>Saccharomyces</taxon>
    </lineage>
</organism>
<protein>
    <recommendedName>
        <fullName evidence="7">Low affinity K(+) transporter 1</fullName>
    </recommendedName>
</protein>